<name>ACCA_RHOBA</name>
<proteinExistence type="inferred from homology"/>
<dbReference type="EC" id="2.1.3.15" evidence="1"/>
<dbReference type="EMBL" id="BX294147">
    <property type="protein sequence ID" value="CAD78571.1"/>
    <property type="molecule type" value="Genomic_DNA"/>
</dbReference>
<dbReference type="RefSeq" id="NP_868293.1">
    <property type="nucleotide sequence ID" value="NC_005027.1"/>
</dbReference>
<dbReference type="RefSeq" id="WP_007338657.1">
    <property type="nucleotide sequence ID" value="NC_005027.1"/>
</dbReference>
<dbReference type="SMR" id="Q7TTY7"/>
<dbReference type="FunCoup" id="Q7TTY7">
    <property type="interactions" value="446"/>
</dbReference>
<dbReference type="STRING" id="243090.RB8310"/>
<dbReference type="EnsemblBacteria" id="CAD78571">
    <property type="protein sequence ID" value="CAD78571"/>
    <property type="gene ID" value="RB8310"/>
</dbReference>
<dbReference type="KEGG" id="rba:RB8310"/>
<dbReference type="PATRIC" id="fig|243090.15.peg.4004"/>
<dbReference type="eggNOG" id="COG0825">
    <property type="taxonomic scope" value="Bacteria"/>
</dbReference>
<dbReference type="HOGENOM" id="CLU_015486_0_2_0"/>
<dbReference type="InParanoid" id="Q7TTY7"/>
<dbReference type="OrthoDB" id="9808023at2"/>
<dbReference type="UniPathway" id="UPA00655">
    <property type="reaction ID" value="UER00711"/>
</dbReference>
<dbReference type="Proteomes" id="UP000001025">
    <property type="component" value="Chromosome"/>
</dbReference>
<dbReference type="GO" id="GO:0009317">
    <property type="term" value="C:acetyl-CoA carboxylase complex"/>
    <property type="evidence" value="ECO:0007669"/>
    <property type="project" value="InterPro"/>
</dbReference>
<dbReference type="GO" id="GO:0003989">
    <property type="term" value="F:acetyl-CoA carboxylase activity"/>
    <property type="evidence" value="ECO:0007669"/>
    <property type="project" value="InterPro"/>
</dbReference>
<dbReference type="GO" id="GO:0005524">
    <property type="term" value="F:ATP binding"/>
    <property type="evidence" value="ECO:0007669"/>
    <property type="project" value="UniProtKB-KW"/>
</dbReference>
<dbReference type="GO" id="GO:0016743">
    <property type="term" value="F:carboxyl- or carbamoyltransferase activity"/>
    <property type="evidence" value="ECO:0007669"/>
    <property type="project" value="UniProtKB-UniRule"/>
</dbReference>
<dbReference type="GO" id="GO:0006633">
    <property type="term" value="P:fatty acid biosynthetic process"/>
    <property type="evidence" value="ECO:0007669"/>
    <property type="project" value="UniProtKB-KW"/>
</dbReference>
<dbReference type="GO" id="GO:2001295">
    <property type="term" value="P:malonyl-CoA biosynthetic process"/>
    <property type="evidence" value="ECO:0007669"/>
    <property type="project" value="UniProtKB-UniRule"/>
</dbReference>
<dbReference type="Gene3D" id="3.90.226.10">
    <property type="entry name" value="2-enoyl-CoA Hydratase, Chain A, domain 1"/>
    <property type="match status" value="1"/>
</dbReference>
<dbReference type="HAMAP" id="MF_00823">
    <property type="entry name" value="AcetylCoA_CT_alpha"/>
    <property type="match status" value="1"/>
</dbReference>
<dbReference type="InterPro" id="IPR001095">
    <property type="entry name" value="Acetyl_CoA_COase_a_su"/>
</dbReference>
<dbReference type="InterPro" id="IPR029045">
    <property type="entry name" value="ClpP/crotonase-like_dom_sf"/>
</dbReference>
<dbReference type="InterPro" id="IPR011763">
    <property type="entry name" value="COA_CT_C"/>
</dbReference>
<dbReference type="NCBIfam" id="TIGR00513">
    <property type="entry name" value="accA"/>
    <property type="match status" value="1"/>
</dbReference>
<dbReference type="NCBIfam" id="NF041504">
    <property type="entry name" value="AccA_sub"/>
    <property type="match status" value="1"/>
</dbReference>
<dbReference type="NCBIfam" id="NF004344">
    <property type="entry name" value="PRK05724.1"/>
    <property type="match status" value="1"/>
</dbReference>
<dbReference type="PANTHER" id="PTHR42853">
    <property type="entry name" value="ACETYL-COENZYME A CARBOXYLASE CARBOXYL TRANSFERASE SUBUNIT ALPHA"/>
    <property type="match status" value="1"/>
</dbReference>
<dbReference type="PANTHER" id="PTHR42853:SF3">
    <property type="entry name" value="ACETYL-COENZYME A CARBOXYLASE CARBOXYL TRANSFERASE SUBUNIT ALPHA, CHLOROPLASTIC"/>
    <property type="match status" value="1"/>
</dbReference>
<dbReference type="Pfam" id="PF03255">
    <property type="entry name" value="ACCA"/>
    <property type="match status" value="1"/>
</dbReference>
<dbReference type="PRINTS" id="PR01069">
    <property type="entry name" value="ACCCTRFRASEA"/>
</dbReference>
<dbReference type="SUPFAM" id="SSF52096">
    <property type="entry name" value="ClpP/crotonase"/>
    <property type="match status" value="1"/>
</dbReference>
<dbReference type="PROSITE" id="PS50989">
    <property type="entry name" value="COA_CT_CTER"/>
    <property type="match status" value="1"/>
</dbReference>
<keyword id="KW-0067">ATP-binding</keyword>
<keyword id="KW-0963">Cytoplasm</keyword>
<keyword id="KW-0275">Fatty acid biosynthesis</keyword>
<keyword id="KW-0276">Fatty acid metabolism</keyword>
<keyword id="KW-0444">Lipid biosynthesis</keyword>
<keyword id="KW-0443">Lipid metabolism</keyword>
<keyword id="KW-0547">Nucleotide-binding</keyword>
<keyword id="KW-1185">Reference proteome</keyword>
<keyword id="KW-0808">Transferase</keyword>
<organism>
    <name type="scientific">Rhodopirellula baltica (strain DSM 10527 / NCIMB 13988 / SH1)</name>
    <dbReference type="NCBI Taxonomy" id="243090"/>
    <lineage>
        <taxon>Bacteria</taxon>
        <taxon>Pseudomonadati</taxon>
        <taxon>Planctomycetota</taxon>
        <taxon>Planctomycetia</taxon>
        <taxon>Pirellulales</taxon>
        <taxon>Pirellulaceae</taxon>
        <taxon>Rhodopirellula</taxon>
    </lineage>
</organism>
<protein>
    <recommendedName>
        <fullName evidence="1">Acetyl-coenzyme A carboxylase carboxyl transferase subunit alpha</fullName>
        <shortName evidence="1">ACCase subunit alpha</shortName>
        <shortName evidence="1">Acetyl-CoA carboxylase carboxyltransferase subunit alpha</shortName>
        <ecNumber evidence="1">2.1.3.15</ecNumber>
    </recommendedName>
</protein>
<accession>Q7TTY7</accession>
<comment type="function">
    <text evidence="1">Component of the acetyl coenzyme A carboxylase (ACC) complex. First, biotin carboxylase catalyzes the carboxylation of biotin on its carrier protein (BCCP) and then the CO(2) group is transferred by the carboxyltransferase to acetyl-CoA to form malonyl-CoA.</text>
</comment>
<comment type="catalytic activity">
    <reaction evidence="1">
        <text>N(6)-carboxybiotinyl-L-lysyl-[protein] + acetyl-CoA = N(6)-biotinyl-L-lysyl-[protein] + malonyl-CoA</text>
        <dbReference type="Rhea" id="RHEA:54728"/>
        <dbReference type="Rhea" id="RHEA-COMP:10505"/>
        <dbReference type="Rhea" id="RHEA-COMP:10506"/>
        <dbReference type="ChEBI" id="CHEBI:57288"/>
        <dbReference type="ChEBI" id="CHEBI:57384"/>
        <dbReference type="ChEBI" id="CHEBI:83144"/>
        <dbReference type="ChEBI" id="CHEBI:83145"/>
        <dbReference type="EC" id="2.1.3.15"/>
    </reaction>
</comment>
<comment type="pathway">
    <text evidence="1">Lipid metabolism; malonyl-CoA biosynthesis; malonyl-CoA from acetyl-CoA: step 1/1.</text>
</comment>
<comment type="subunit">
    <text evidence="1">Acetyl-CoA carboxylase is a heterohexamer composed of biotin carboxyl carrier protein (AccB), biotin carboxylase (AccC) and two subunits each of ACCase subunit alpha (AccA) and ACCase subunit beta (AccD).</text>
</comment>
<comment type="subcellular location">
    <subcellularLocation>
        <location evidence="1">Cytoplasm</location>
    </subcellularLocation>
</comment>
<comment type="similarity">
    <text evidence="1">Belongs to the AccA family.</text>
</comment>
<gene>
    <name evidence="1" type="primary">accA</name>
    <name type="ordered locus">RB8310</name>
</gene>
<sequence>MAGPGLEFENEIADLEEQIASLERNTDRSEEIDSAIRSLRLARVAKLKETYSSLDPWQTVQVARHKNRPYTRDYLNLAFDEFVELHGDKHFGDDRAMLSGFAKLDRFKVMVIGHQKGRTYKERAACHFGCAHPEGYRKAMVKMKMAEKYRLPVICFIDTPGAYPGIGAEERGQAQVIAESMFMMSDLKTPVICVVIGEGGSGGALGIGVGDRVAVLQHAYYSVISPEGCAGILWKSHEHAPKAAAALRFTSDHLLRLGVVDDVLEEPLGGAHRDHHQMATRMKTYLSRQLSELEEMPVDLMLEQRYEKFRKLGVFLEES</sequence>
<feature type="chain" id="PRO_0000223818" description="Acetyl-coenzyme A carboxylase carboxyl transferase subunit alpha">
    <location>
        <begin position="1"/>
        <end position="319"/>
    </location>
</feature>
<feature type="domain" description="CoA carboxyltransferase C-terminal" evidence="2">
    <location>
        <begin position="31"/>
        <end position="292"/>
    </location>
</feature>
<evidence type="ECO:0000255" key="1">
    <source>
        <dbReference type="HAMAP-Rule" id="MF_00823"/>
    </source>
</evidence>
<evidence type="ECO:0000255" key="2">
    <source>
        <dbReference type="PROSITE-ProRule" id="PRU01137"/>
    </source>
</evidence>
<reference key="1">
    <citation type="journal article" date="2003" name="Proc. Natl. Acad. Sci. U.S.A.">
        <title>Complete genome sequence of the marine planctomycete Pirellula sp. strain 1.</title>
        <authorList>
            <person name="Gloeckner F.O."/>
            <person name="Kube M."/>
            <person name="Bauer M."/>
            <person name="Teeling H."/>
            <person name="Lombardot T."/>
            <person name="Ludwig W."/>
            <person name="Gade D."/>
            <person name="Beck A."/>
            <person name="Borzym K."/>
            <person name="Heitmann K."/>
            <person name="Rabus R."/>
            <person name="Schlesner H."/>
            <person name="Amann R."/>
            <person name="Reinhardt R."/>
        </authorList>
    </citation>
    <scope>NUCLEOTIDE SEQUENCE [LARGE SCALE GENOMIC DNA]</scope>
    <source>
        <strain>DSM 10527 / NCIMB 13988 / SH1</strain>
    </source>
</reference>